<proteinExistence type="inferred from homology"/>
<keyword id="KW-0574">Periplasm</keyword>
<keyword id="KW-0732">Signal</keyword>
<evidence type="ECO:0000255" key="1">
    <source>
        <dbReference type="HAMAP-Rule" id="MF_01069"/>
    </source>
</evidence>
<protein>
    <recommendedName>
        <fullName evidence="1">Glucans biosynthesis protein G</fullName>
    </recommendedName>
</protein>
<dbReference type="EMBL" id="FM209186">
    <property type="protein sequence ID" value="CAW30222.1"/>
    <property type="molecule type" value="Genomic_DNA"/>
</dbReference>
<dbReference type="RefSeq" id="WP_003095915.1">
    <property type="nucleotide sequence ID" value="NC_011770.1"/>
</dbReference>
<dbReference type="SMR" id="B7V3H1"/>
<dbReference type="KEGG" id="pag:PLES_54681"/>
<dbReference type="HOGENOM" id="CLU_023403_2_0_6"/>
<dbReference type="UniPathway" id="UPA00637"/>
<dbReference type="GO" id="GO:0030288">
    <property type="term" value="C:outer membrane-bounded periplasmic space"/>
    <property type="evidence" value="ECO:0007669"/>
    <property type="project" value="TreeGrafter"/>
</dbReference>
<dbReference type="GO" id="GO:0030246">
    <property type="term" value="F:carbohydrate binding"/>
    <property type="evidence" value="ECO:0007669"/>
    <property type="project" value="InterPro"/>
</dbReference>
<dbReference type="GO" id="GO:0003824">
    <property type="term" value="F:catalytic activity"/>
    <property type="evidence" value="ECO:0007669"/>
    <property type="project" value="InterPro"/>
</dbReference>
<dbReference type="GO" id="GO:0051274">
    <property type="term" value="P:beta-glucan biosynthetic process"/>
    <property type="evidence" value="ECO:0007669"/>
    <property type="project" value="TreeGrafter"/>
</dbReference>
<dbReference type="FunFam" id="2.70.98.10:FF:000001">
    <property type="entry name" value="Glucans biosynthesis protein G"/>
    <property type="match status" value="1"/>
</dbReference>
<dbReference type="Gene3D" id="2.70.98.10">
    <property type="match status" value="1"/>
</dbReference>
<dbReference type="Gene3D" id="2.60.40.10">
    <property type="entry name" value="Immunoglobulins"/>
    <property type="match status" value="1"/>
</dbReference>
<dbReference type="HAMAP" id="MF_01069">
    <property type="entry name" value="MdoG_OpgG"/>
    <property type="match status" value="1"/>
</dbReference>
<dbReference type="InterPro" id="IPR011013">
    <property type="entry name" value="Gal_mutarotase_sf_dom"/>
</dbReference>
<dbReference type="InterPro" id="IPR014718">
    <property type="entry name" value="GH-type_carb-bd"/>
</dbReference>
<dbReference type="InterPro" id="IPR014438">
    <property type="entry name" value="Glucan_biosyn_MdoG/MdoD"/>
</dbReference>
<dbReference type="InterPro" id="IPR007444">
    <property type="entry name" value="Glucan_biosyn_MdoG_C"/>
</dbReference>
<dbReference type="InterPro" id="IPR013783">
    <property type="entry name" value="Ig-like_fold"/>
</dbReference>
<dbReference type="InterPro" id="IPR014756">
    <property type="entry name" value="Ig_E-set"/>
</dbReference>
<dbReference type="InterPro" id="IPR023704">
    <property type="entry name" value="MdoG_OpgG"/>
</dbReference>
<dbReference type="PANTHER" id="PTHR30504">
    <property type="entry name" value="GLUCANS BIOSYNTHESIS PROTEIN"/>
    <property type="match status" value="1"/>
</dbReference>
<dbReference type="PANTHER" id="PTHR30504:SF4">
    <property type="entry name" value="GLUCANS BIOSYNTHESIS PROTEIN G"/>
    <property type="match status" value="1"/>
</dbReference>
<dbReference type="Pfam" id="PF04349">
    <property type="entry name" value="MdoG"/>
    <property type="match status" value="1"/>
</dbReference>
<dbReference type="PIRSF" id="PIRSF006281">
    <property type="entry name" value="MdoG"/>
    <property type="match status" value="1"/>
</dbReference>
<dbReference type="SUPFAM" id="SSF81296">
    <property type="entry name" value="E set domains"/>
    <property type="match status" value="1"/>
</dbReference>
<dbReference type="SUPFAM" id="SSF74650">
    <property type="entry name" value="Galactose mutarotase-like"/>
    <property type="match status" value="1"/>
</dbReference>
<reference key="1">
    <citation type="journal article" date="2009" name="Genome Res.">
        <title>Newly introduced genomic prophage islands are critical determinants of in vivo competitiveness in the Liverpool epidemic strain of Pseudomonas aeruginosa.</title>
        <authorList>
            <person name="Winstanley C."/>
            <person name="Langille M.G.I."/>
            <person name="Fothergill J.L."/>
            <person name="Kukavica-Ibrulj I."/>
            <person name="Paradis-Bleau C."/>
            <person name="Sanschagrin F."/>
            <person name="Thomson N.R."/>
            <person name="Winsor G.L."/>
            <person name="Quail M.A."/>
            <person name="Lennard N."/>
            <person name="Bignell A."/>
            <person name="Clarke L."/>
            <person name="Seeger K."/>
            <person name="Saunders D."/>
            <person name="Harris D."/>
            <person name="Parkhill J."/>
            <person name="Hancock R.E.W."/>
            <person name="Brinkman F.S.L."/>
            <person name="Levesque R.C."/>
        </authorList>
    </citation>
    <scope>NUCLEOTIDE SEQUENCE [LARGE SCALE GENOMIC DNA]</scope>
    <source>
        <strain>LESB58</strain>
    </source>
</reference>
<name>OPGG_PSEA8</name>
<sequence length="525" mass="59476">MIFRSVSNTDFRARVRTLLLAGSTALAFVAAPVWAFSIDDVASKAKDLAGDKYSAPTSNLPSEFSEMKFADYQQIRFINERAYWGKLKTPFKLSFYHQGMHFDTPVKINEVTATTVKPIKYDRTKFDFGSLKFDENATKDLGYAGFRVLYPINKADKQDEIATFLGASYFRVVGKGQVYGLSARGLAIDTALPSGEEFPRFREFWIERPKAQDKQLVIYALLDSPRATGAYRFVLRPGKDAVMDVQARVFLRDKVSKLGLAPLTSMYLFGSNQPSEQHNFRPELHDSSGLQIHAGNGEWLWRPLNNPKHLSVSTFSVENPKGFGLLQRGREFSRYEDLDDRYDLRPSAWIEPKGDWGKGTVELVEIPTPDETNDNIVAFWNPETQPEVGKPLDFAYRLHWTMDEDELHDPKSSWVKQTMRSVGDVKQKNLIRQQDGSTALVVDFEGPALKDLAPDAPVTTQVSTDSNAEVVENSLRYNPVLKGWRLTLRIKVKDPKKPVEMRAALVDEAQKPLSETWSYQLPADE</sequence>
<accession>B7V3H1</accession>
<gene>
    <name evidence="1" type="primary">opgG</name>
    <name type="ordered locus">PLES_54681</name>
</gene>
<comment type="function">
    <text evidence="1">Involved in the biosynthesis of osmoregulated periplasmic glucans (OPGs).</text>
</comment>
<comment type="pathway">
    <text evidence="1">Glycan metabolism; osmoregulated periplasmic glucan (OPG) biosynthesis.</text>
</comment>
<comment type="subcellular location">
    <subcellularLocation>
        <location evidence="1">Periplasm</location>
    </subcellularLocation>
</comment>
<comment type="similarity">
    <text evidence="1">Belongs to the OpgD/OpgG family.</text>
</comment>
<organism>
    <name type="scientific">Pseudomonas aeruginosa (strain LESB58)</name>
    <dbReference type="NCBI Taxonomy" id="557722"/>
    <lineage>
        <taxon>Bacteria</taxon>
        <taxon>Pseudomonadati</taxon>
        <taxon>Pseudomonadota</taxon>
        <taxon>Gammaproteobacteria</taxon>
        <taxon>Pseudomonadales</taxon>
        <taxon>Pseudomonadaceae</taxon>
        <taxon>Pseudomonas</taxon>
    </lineage>
</organism>
<feature type="signal peptide" evidence="1">
    <location>
        <begin position="1"/>
        <end position="35"/>
    </location>
</feature>
<feature type="chain" id="PRO_1000136617" description="Glucans biosynthesis protein G">
    <location>
        <begin position="36"/>
        <end position="525"/>
    </location>
</feature>